<proteinExistence type="inferred from homology"/>
<name>SYS_CLOPE</name>
<gene>
    <name evidence="1" type="primary">serS</name>
    <name type="ordered locus">CPE0014</name>
</gene>
<reference key="1">
    <citation type="journal article" date="2002" name="Proc. Natl. Acad. Sci. U.S.A.">
        <title>Complete genome sequence of Clostridium perfringens, an anaerobic flesh-eater.</title>
        <authorList>
            <person name="Shimizu T."/>
            <person name="Ohtani K."/>
            <person name="Hirakawa H."/>
            <person name="Ohshima K."/>
            <person name="Yamashita A."/>
            <person name="Shiba T."/>
            <person name="Ogasawara N."/>
            <person name="Hattori M."/>
            <person name="Kuhara S."/>
            <person name="Hayashi H."/>
        </authorList>
    </citation>
    <scope>NUCLEOTIDE SEQUENCE [LARGE SCALE GENOMIC DNA]</scope>
    <source>
        <strain>13 / Type A</strain>
    </source>
</reference>
<organism>
    <name type="scientific">Clostridium perfringens (strain 13 / Type A)</name>
    <dbReference type="NCBI Taxonomy" id="195102"/>
    <lineage>
        <taxon>Bacteria</taxon>
        <taxon>Bacillati</taxon>
        <taxon>Bacillota</taxon>
        <taxon>Clostridia</taxon>
        <taxon>Eubacteriales</taxon>
        <taxon>Clostridiaceae</taxon>
        <taxon>Clostridium</taxon>
    </lineage>
</organism>
<sequence length="425" mass="48398">MLDLKKLRSNTEEVKKALSNRGEDFDVNVIDEVIALDEERRKILVDVEALKKQRNEVSAEIPKRKKAGEDVTEVMAEMREIGDKIKADDAKVAELNDKINYIMLRIPNIPNPAVPEGETDEDNVEIKRWGEPTKFNFEPKAHWDLGTDLDLLDFERGGKVAGSRFTVYKGMGARLERSIINYFLDKHTFENGYTEVLPPYMVNRDSMTGTGQLPKFEEDAFKVENNGYFLIPTAEVPVTNMYRNETLEGDKLPIKHAAYSACFRAEAGSAGRDTRGLIRQHQFNKVELVKFCKPEQSYEELDKLVQDAESVLQGLGLPYRIVRICKGDLGFTAALKYDIEVWMPSYNRYVEISSCSNFEDFQARRANIKYKNSPKEKPQFVHTLNGSGVAIGRTVAAILENYQQEDGSVVIPEALKEYMRCDLLK</sequence>
<feature type="chain" id="PRO_0000122036" description="Serine--tRNA ligase">
    <location>
        <begin position="1"/>
        <end position="425"/>
    </location>
</feature>
<feature type="binding site" evidence="1">
    <location>
        <begin position="233"/>
        <end position="235"/>
    </location>
    <ligand>
        <name>L-serine</name>
        <dbReference type="ChEBI" id="CHEBI:33384"/>
    </ligand>
</feature>
<feature type="binding site" evidence="1">
    <location>
        <begin position="264"/>
        <end position="266"/>
    </location>
    <ligand>
        <name>ATP</name>
        <dbReference type="ChEBI" id="CHEBI:30616"/>
    </ligand>
</feature>
<feature type="binding site" evidence="1">
    <location>
        <position position="287"/>
    </location>
    <ligand>
        <name>L-serine</name>
        <dbReference type="ChEBI" id="CHEBI:33384"/>
    </ligand>
</feature>
<feature type="binding site" evidence="1">
    <location>
        <begin position="351"/>
        <end position="354"/>
    </location>
    <ligand>
        <name>ATP</name>
        <dbReference type="ChEBI" id="CHEBI:30616"/>
    </ligand>
</feature>
<feature type="binding site" evidence="1">
    <location>
        <position position="387"/>
    </location>
    <ligand>
        <name>L-serine</name>
        <dbReference type="ChEBI" id="CHEBI:33384"/>
    </ligand>
</feature>
<accession>Q8XPE9</accession>
<comment type="function">
    <text evidence="1">Catalyzes the attachment of serine to tRNA(Ser). Is also able to aminoacylate tRNA(Sec) with serine, to form the misacylated tRNA L-seryl-tRNA(Sec), which will be further converted into selenocysteinyl-tRNA(Sec).</text>
</comment>
<comment type="catalytic activity">
    <reaction evidence="1">
        <text>tRNA(Ser) + L-serine + ATP = L-seryl-tRNA(Ser) + AMP + diphosphate + H(+)</text>
        <dbReference type="Rhea" id="RHEA:12292"/>
        <dbReference type="Rhea" id="RHEA-COMP:9669"/>
        <dbReference type="Rhea" id="RHEA-COMP:9703"/>
        <dbReference type="ChEBI" id="CHEBI:15378"/>
        <dbReference type="ChEBI" id="CHEBI:30616"/>
        <dbReference type="ChEBI" id="CHEBI:33019"/>
        <dbReference type="ChEBI" id="CHEBI:33384"/>
        <dbReference type="ChEBI" id="CHEBI:78442"/>
        <dbReference type="ChEBI" id="CHEBI:78533"/>
        <dbReference type="ChEBI" id="CHEBI:456215"/>
        <dbReference type="EC" id="6.1.1.11"/>
    </reaction>
</comment>
<comment type="catalytic activity">
    <reaction evidence="1">
        <text>tRNA(Sec) + L-serine + ATP = L-seryl-tRNA(Sec) + AMP + diphosphate + H(+)</text>
        <dbReference type="Rhea" id="RHEA:42580"/>
        <dbReference type="Rhea" id="RHEA-COMP:9742"/>
        <dbReference type="Rhea" id="RHEA-COMP:10128"/>
        <dbReference type="ChEBI" id="CHEBI:15378"/>
        <dbReference type="ChEBI" id="CHEBI:30616"/>
        <dbReference type="ChEBI" id="CHEBI:33019"/>
        <dbReference type="ChEBI" id="CHEBI:33384"/>
        <dbReference type="ChEBI" id="CHEBI:78442"/>
        <dbReference type="ChEBI" id="CHEBI:78533"/>
        <dbReference type="ChEBI" id="CHEBI:456215"/>
        <dbReference type="EC" id="6.1.1.11"/>
    </reaction>
</comment>
<comment type="pathway">
    <text evidence="1">Aminoacyl-tRNA biosynthesis; selenocysteinyl-tRNA(Sec) biosynthesis; L-seryl-tRNA(Sec) from L-serine and tRNA(Sec): step 1/1.</text>
</comment>
<comment type="subunit">
    <text evidence="1">Homodimer. The tRNA molecule binds across the dimer.</text>
</comment>
<comment type="subcellular location">
    <subcellularLocation>
        <location evidence="1">Cytoplasm</location>
    </subcellularLocation>
</comment>
<comment type="domain">
    <text evidence="1">Consists of two distinct domains, a catalytic core and a N-terminal extension that is involved in tRNA binding.</text>
</comment>
<comment type="similarity">
    <text evidence="1">Belongs to the class-II aminoacyl-tRNA synthetase family. Type-1 seryl-tRNA synthetase subfamily.</text>
</comment>
<comment type="sequence caution" evidence="2">
    <conflict type="erroneous initiation">
        <sequence resource="EMBL-CDS" id="BAB79720"/>
    </conflict>
</comment>
<evidence type="ECO:0000255" key="1">
    <source>
        <dbReference type="HAMAP-Rule" id="MF_00176"/>
    </source>
</evidence>
<evidence type="ECO:0000305" key="2"/>
<protein>
    <recommendedName>
        <fullName evidence="1">Serine--tRNA ligase</fullName>
        <ecNumber evidence="1">6.1.1.11</ecNumber>
    </recommendedName>
    <alternativeName>
        <fullName evidence="1">Seryl-tRNA synthetase</fullName>
        <shortName evidence="1">SerRS</shortName>
    </alternativeName>
    <alternativeName>
        <fullName evidence="1">Seryl-tRNA(Ser/Sec) synthetase</fullName>
    </alternativeName>
</protein>
<dbReference type="EC" id="6.1.1.11" evidence="1"/>
<dbReference type="EMBL" id="BA000016">
    <property type="protein sequence ID" value="BAB79720.1"/>
    <property type="status" value="ALT_INIT"/>
    <property type="molecule type" value="Genomic_DNA"/>
</dbReference>
<dbReference type="RefSeq" id="WP_003450982.1">
    <property type="nucleotide sequence ID" value="NC_003366.1"/>
</dbReference>
<dbReference type="SMR" id="Q8XPE9"/>
<dbReference type="STRING" id="195102.gene:10489238"/>
<dbReference type="GeneID" id="93000708"/>
<dbReference type="KEGG" id="cpe:CPE0014"/>
<dbReference type="HOGENOM" id="CLU_023797_1_1_9"/>
<dbReference type="UniPathway" id="UPA00906">
    <property type="reaction ID" value="UER00895"/>
</dbReference>
<dbReference type="Proteomes" id="UP000000818">
    <property type="component" value="Chromosome"/>
</dbReference>
<dbReference type="GO" id="GO:0005737">
    <property type="term" value="C:cytoplasm"/>
    <property type="evidence" value="ECO:0007669"/>
    <property type="project" value="UniProtKB-SubCell"/>
</dbReference>
<dbReference type="GO" id="GO:0005524">
    <property type="term" value="F:ATP binding"/>
    <property type="evidence" value="ECO:0007669"/>
    <property type="project" value="UniProtKB-UniRule"/>
</dbReference>
<dbReference type="GO" id="GO:0140096">
    <property type="term" value="F:catalytic activity, acting on a protein"/>
    <property type="evidence" value="ECO:0007669"/>
    <property type="project" value="UniProtKB-ARBA"/>
</dbReference>
<dbReference type="GO" id="GO:0004828">
    <property type="term" value="F:serine-tRNA ligase activity"/>
    <property type="evidence" value="ECO:0007669"/>
    <property type="project" value="UniProtKB-UniRule"/>
</dbReference>
<dbReference type="GO" id="GO:0016740">
    <property type="term" value="F:transferase activity"/>
    <property type="evidence" value="ECO:0007669"/>
    <property type="project" value="UniProtKB-ARBA"/>
</dbReference>
<dbReference type="GO" id="GO:0016260">
    <property type="term" value="P:selenocysteine biosynthetic process"/>
    <property type="evidence" value="ECO:0007669"/>
    <property type="project" value="UniProtKB-UniRule"/>
</dbReference>
<dbReference type="GO" id="GO:0006434">
    <property type="term" value="P:seryl-tRNA aminoacylation"/>
    <property type="evidence" value="ECO:0007669"/>
    <property type="project" value="UniProtKB-UniRule"/>
</dbReference>
<dbReference type="CDD" id="cd00770">
    <property type="entry name" value="SerRS_core"/>
    <property type="match status" value="1"/>
</dbReference>
<dbReference type="Gene3D" id="3.30.930.10">
    <property type="entry name" value="Bira Bifunctional Protein, Domain 2"/>
    <property type="match status" value="1"/>
</dbReference>
<dbReference type="Gene3D" id="1.10.287.40">
    <property type="entry name" value="Serine-tRNA synthetase, tRNA binding domain"/>
    <property type="match status" value="1"/>
</dbReference>
<dbReference type="HAMAP" id="MF_00176">
    <property type="entry name" value="Ser_tRNA_synth_type1"/>
    <property type="match status" value="1"/>
</dbReference>
<dbReference type="InterPro" id="IPR002314">
    <property type="entry name" value="aa-tRNA-synt_IIb"/>
</dbReference>
<dbReference type="InterPro" id="IPR006195">
    <property type="entry name" value="aa-tRNA-synth_II"/>
</dbReference>
<dbReference type="InterPro" id="IPR045864">
    <property type="entry name" value="aa-tRNA-synth_II/BPL/LPL"/>
</dbReference>
<dbReference type="InterPro" id="IPR002317">
    <property type="entry name" value="Ser-tRNA-ligase_type_1"/>
</dbReference>
<dbReference type="InterPro" id="IPR015866">
    <property type="entry name" value="Ser-tRNA-synth_1_N"/>
</dbReference>
<dbReference type="InterPro" id="IPR042103">
    <property type="entry name" value="SerRS_1_N_sf"/>
</dbReference>
<dbReference type="InterPro" id="IPR033729">
    <property type="entry name" value="SerRS_core"/>
</dbReference>
<dbReference type="InterPro" id="IPR010978">
    <property type="entry name" value="tRNA-bd_arm"/>
</dbReference>
<dbReference type="NCBIfam" id="TIGR00414">
    <property type="entry name" value="serS"/>
    <property type="match status" value="1"/>
</dbReference>
<dbReference type="PANTHER" id="PTHR43697:SF1">
    <property type="entry name" value="SERINE--TRNA LIGASE"/>
    <property type="match status" value="1"/>
</dbReference>
<dbReference type="PANTHER" id="PTHR43697">
    <property type="entry name" value="SERYL-TRNA SYNTHETASE"/>
    <property type="match status" value="1"/>
</dbReference>
<dbReference type="Pfam" id="PF02403">
    <property type="entry name" value="Seryl_tRNA_N"/>
    <property type="match status" value="1"/>
</dbReference>
<dbReference type="Pfam" id="PF00587">
    <property type="entry name" value="tRNA-synt_2b"/>
    <property type="match status" value="1"/>
</dbReference>
<dbReference type="PIRSF" id="PIRSF001529">
    <property type="entry name" value="Ser-tRNA-synth_IIa"/>
    <property type="match status" value="1"/>
</dbReference>
<dbReference type="PRINTS" id="PR00981">
    <property type="entry name" value="TRNASYNTHSER"/>
</dbReference>
<dbReference type="SUPFAM" id="SSF55681">
    <property type="entry name" value="Class II aaRS and biotin synthetases"/>
    <property type="match status" value="1"/>
</dbReference>
<dbReference type="SUPFAM" id="SSF46589">
    <property type="entry name" value="tRNA-binding arm"/>
    <property type="match status" value="1"/>
</dbReference>
<dbReference type="PROSITE" id="PS50862">
    <property type="entry name" value="AA_TRNA_LIGASE_II"/>
    <property type="match status" value="1"/>
</dbReference>
<keyword id="KW-0030">Aminoacyl-tRNA synthetase</keyword>
<keyword id="KW-0067">ATP-binding</keyword>
<keyword id="KW-0963">Cytoplasm</keyword>
<keyword id="KW-0436">Ligase</keyword>
<keyword id="KW-0547">Nucleotide-binding</keyword>
<keyword id="KW-0648">Protein biosynthesis</keyword>
<keyword id="KW-1185">Reference proteome</keyword>